<evidence type="ECO:0000250" key="1">
    <source>
        <dbReference type="UniProtKB" id="A6QIR4"/>
    </source>
</evidence>
<evidence type="ECO:0000305" key="2"/>
<dbReference type="EC" id="3.1.-.-"/>
<dbReference type="EMBL" id="AJ938182">
    <property type="protein sequence ID" value="CAI81642.1"/>
    <property type="molecule type" value="Genomic_DNA"/>
</dbReference>
<dbReference type="RefSeq" id="WP_000621174.1">
    <property type="nucleotide sequence ID" value="NC_007622.1"/>
</dbReference>
<dbReference type="BMRB" id="Q2YUI5"/>
<dbReference type="SMR" id="Q2YUI5"/>
<dbReference type="KEGG" id="sab:SAB1953c"/>
<dbReference type="HOGENOM" id="CLU_121823_1_0_9"/>
<dbReference type="GO" id="GO:0003677">
    <property type="term" value="F:DNA binding"/>
    <property type="evidence" value="ECO:0007669"/>
    <property type="project" value="InterPro"/>
</dbReference>
<dbReference type="GO" id="GO:0003723">
    <property type="term" value="F:RNA binding"/>
    <property type="evidence" value="ECO:0007669"/>
    <property type="project" value="UniProtKB-KW"/>
</dbReference>
<dbReference type="GO" id="GO:0004521">
    <property type="term" value="F:RNA endonuclease activity"/>
    <property type="evidence" value="ECO:0007669"/>
    <property type="project" value="TreeGrafter"/>
</dbReference>
<dbReference type="GO" id="GO:0006402">
    <property type="term" value="P:mRNA catabolic process"/>
    <property type="evidence" value="ECO:0007669"/>
    <property type="project" value="TreeGrafter"/>
</dbReference>
<dbReference type="GO" id="GO:0016075">
    <property type="term" value="P:rRNA catabolic process"/>
    <property type="evidence" value="ECO:0007669"/>
    <property type="project" value="TreeGrafter"/>
</dbReference>
<dbReference type="Gene3D" id="2.30.30.110">
    <property type="match status" value="1"/>
</dbReference>
<dbReference type="InterPro" id="IPR003477">
    <property type="entry name" value="PemK-like"/>
</dbReference>
<dbReference type="InterPro" id="IPR011067">
    <property type="entry name" value="Plasmid_toxin/cell-grow_inhib"/>
</dbReference>
<dbReference type="PANTHER" id="PTHR33988:SF2">
    <property type="entry name" value="ENDORIBONUCLEASE MAZF"/>
    <property type="match status" value="1"/>
</dbReference>
<dbReference type="PANTHER" id="PTHR33988">
    <property type="entry name" value="ENDORIBONUCLEASE MAZF-RELATED"/>
    <property type="match status" value="1"/>
</dbReference>
<dbReference type="Pfam" id="PF02452">
    <property type="entry name" value="PemK_toxin"/>
    <property type="match status" value="1"/>
</dbReference>
<dbReference type="PIRSF" id="PIRSF033490">
    <property type="entry name" value="MazF"/>
    <property type="match status" value="1"/>
</dbReference>
<dbReference type="SUPFAM" id="SSF50118">
    <property type="entry name" value="Cell growth inhibitor/plasmid maintenance toxic component"/>
    <property type="match status" value="1"/>
</dbReference>
<comment type="function">
    <text evidence="1">Toxic component of a type II toxin-antitoxin (TA) system. Ribosome-independent, sequence-specific endoribonuclease that cleaves mRNA, thus inhibiting protein synthesis and inducing bacterial stasis. It cuts between the first and nucleotides of 5'-UACAU-3' in single-stranded RNA. Neutralized by coexpression with cognate antitoxin MazE.</text>
</comment>
<comment type="subunit">
    <text evidence="1">Forms a complex with MazE which is no longer active as an endoribonuclease.</text>
</comment>
<comment type="similarity">
    <text evidence="2">Belongs to the PemK/MazF family.</text>
</comment>
<keyword id="KW-0255">Endonuclease</keyword>
<keyword id="KW-0378">Hydrolase</keyword>
<keyword id="KW-0540">Nuclease</keyword>
<keyword id="KW-0694">RNA-binding</keyword>
<keyword id="KW-1277">Toxin-antitoxin system</keyword>
<organism>
    <name type="scientific">Staphylococcus aureus (strain bovine RF122 / ET3-1)</name>
    <dbReference type="NCBI Taxonomy" id="273036"/>
    <lineage>
        <taxon>Bacteria</taxon>
        <taxon>Bacillati</taxon>
        <taxon>Bacillota</taxon>
        <taxon>Bacilli</taxon>
        <taxon>Bacillales</taxon>
        <taxon>Staphylococcaceae</taxon>
        <taxon>Staphylococcus</taxon>
    </lineage>
</organism>
<reference key="1">
    <citation type="journal article" date="2007" name="PLoS ONE">
        <title>Molecular correlates of host specialization in Staphylococcus aureus.</title>
        <authorList>
            <person name="Herron-Olson L."/>
            <person name="Fitzgerald J.R."/>
            <person name="Musser J.M."/>
            <person name="Kapur V."/>
        </authorList>
    </citation>
    <scope>NUCLEOTIDE SEQUENCE [LARGE SCALE GENOMIC DNA]</scope>
    <source>
        <strain>bovine RF122 / ET3-1</strain>
    </source>
</reference>
<proteinExistence type="inferred from homology"/>
<accession>Q2YUI5</accession>
<gene>
    <name type="primary">mazF</name>
    <name type="ordered locus">SAB1953c</name>
</gene>
<sequence>MIRRGDVYLADLSPVQGSEQGGVRPVVIIQNDTGNKYSPTVIVAAITGRINKAKIPTHVEIEKKKYKLDKDSVILLEQIRTLDKKRLKEKLTYLSDDKMKEVDNALMISLGLNAVAH</sequence>
<protein>
    <recommendedName>
        <fullName>Endoribonuclease MazF</fullName>
        <ecNumber>3.1.-.-</ecNumber>
    </recommendedName>
    <alternativeName>
        <fullName>Toxin MazF</fullName>
    </alternativeName>
    <alternativeName>
        <fullName>mRNA interferase MazF</fullName>
    </alternativeName>
</protein>
<feature type="chain" id="PRO_0000330694" description="Endoribonuclease MazF">
    <location>
        <begin position="1"/>
        <end position="117"/>
    </location>
</feature>
<name>MAZF_STAAB</name>